<accession>Q43215</accession>
<dbReference type="EMBL" id="D37945">
    <property type="protein sequence ID" value="BAA07159.1"/>
    <property type="molecule type" value="Genomic_DNA"/>
</dbReference>
<dbReference type="PIR" id="S56687">
    <property type="entry name" value="S56687"/>
</dbReference>
<dbReference type="SMR" id="Q43215"/>
<dbReference type="STRING" id="4565.Q43215"/>
<dbReference type="PaxDb" id="4565-Traes_3B_29EA1AC2D.1"/>
<dbReference type="EnsemblPlants" id="TraesCAD_scaffold_038711_01G000100.1">
    <property type="protein sequence ID" value="TraesCAD_scaffold_038711_01G000100.1"/>
    <property type="gene ID" value="TraesCAD_scaffold_038711_01G000100"/>
</dbReference>
<dbReference type="EnsemblPlants" id="TraesCS3B02G114400.1">
    <property type="protein sequence ID" value="TraesCS3B02G114400.1.cds1"/>
    <property type="gene ID" value="TraesCS3B02G114400"/>
</dbReference>
<dbReference type="EnsemblPlants" id="TraesCS3B03G0260600.1">
    <property type="protein sequence ID" value="TraesCS3B03G0260600.1.CDS1"/>
    <property type="gene ID" value="TraesCS3B03G0260600"/>
</dbReference>
<dbReference type="EnsemblPlants" id="TraesNOR3B03G01597010.1">
    <property type="protein sequence ID" value="TraesNOR3B03G01597010.1.CDS1"/>
    <property type="gene ID" value="TraesNOR3B03G01597010"/>
</dbReference>
<dbReference type="EnsemblPlants" id="TraesPARA_EIv1.0_1020760.1">
    <property type="protein sequence ID" value="TraesPARA_EIv1.0_1020760.1.CDS1"/>
    <property type="gene ID" value="TraesPARA_EIv1.0_1020760"/>
</dbReference>
<dbReference type="EnsemblPlants" id="TraesRN3B0100257800.1">
    <property type="protein sequence ID" value="TraesRN3B0100257800.1"/>
    <property type="gene ID" value="TraesRN3B0100257800"/>
</dbReference>
<dbReference type="EnsemblPlants" id="TraesWEE_scaffold_032569_01G000100.1">
    <property type="protein sequence ID" value="TraesWEE_scaffold_032569_01G000100.1"/>
    <property type="gene ID" value="TraesWEE_scaffold_032569_01G000100"/>
</dbReference>
<dbReference type="Gramene" id="TraesCAD_scaffold_038711_01G000100.1">
    <property type="protein sequence ID" value="TraesCAD_scaffold_038711_01G000100.1"/>
    <property type="gene ID" value="TraesCAD_scaffold_038711_01G000100"/>
</dbReference>
<dbReference type="Gramene" id="TraesCS3B02G114400.1">
    <property type="protein sequence ID" value="TraesCS3B02G114400.1.cds1"/>
    <property type="gene ID" value="TraesCS3B02G114400"/>
</dbReference>
<dbReference type="Gramene" id="TraesCS3B03G0260600.1">
    <property type="protein sequence ID" value="TraesCS3B03G0260600.1.CDS1"/>
    <property type="gene ID" value="TraesCS3B03G0260600"/>
</dbReference>
<dbReference type="Gramene" id="TraesNOR3B03G01597010.1">
    <property type="protein sequence ID" value="TraesNOR3B03G01597010.1.CDS1"/>
    <property type="gene ID" value="TraesNOR3B03G01597010"/>
</dbReference>
<dbReference type="Gramene" id="TraesPARA_EIv1.0_1020760.1">
    <property type="protein sequence ID" value="TraesPARA_EIv1.0_1020760.1.CDS1"/>
    <property type="gene ID" value="TraesPARA_EIv1.0_1020760"/>
</dbReference>
<dbReference type="Gramene" id="TraesRN3B0100257800.1">
    <property type="protein sequence ID" value="TraesRN3B0100257800.1"/>
    <property type="gene ID" value="TraesRN3B0100257800"/>
</dbReference>
<dbReference type="Gramene" id="TraesWEE_scaffold_032569_01G000100.1">
    <property type="protein sequence ID" value="TraesWEE_scaffold_032569_01G000100.1"/>
    <property type="gene ID" value="TraesWEE_scaffold_032569_01G000100"/>
</dbReference>
<dbReference type="eggNOG" id="KOG1744">
    <property type="taxonomic scope" value="Eukaryota"/>
</dbReference>
<dbReference type="OMA" id="TRYIAKS"/>
<dbReference type="OrthoDB" id="1914959at2759"/>
<dbReference type="Proteomes" id="UP000019116">
    <property type="component" value="Chromosome 3B"/>
</dbReference>
<dbReference type="ExpressionAtlas" id="Q43215">
    <property type="expression patterns" value="baseline"/>
</dbReference>
<dbReference type="GO" id="GO:0000786">
    <property type="term" value="C:nucleosome"/>
    <property type="evidence" value="ECO:0007669"/>
    <property type="project" value="UniProtKB-KW"/>
</dbReference>
<dbReference type="GO" id="GO:0005634">
    <property type="term" value="C:nucleus"/>
    <property type="evidence" value="ECO:0007669"/>
    <property type="project" value="UniProtKB-SubCell"/>
</dbReference>
<dbReference type="GO" id="GO:0003677">
    <property type="term" value="F:DNA binding"/>
    <property type="evidence" value="ECO:0000318"/>
    <property type="project" value="GO_Central"/>
</dbReference>
<dbReference type="GO" id="GO:0046982">
    <property type="term" value="F:protein heterodimerization activity"/>
    <property type="evidence" value="ECO:0007669"/>
    <property type="project" value="InterPro"/>
</dbReference>
<dbReference type="GO" id="GO:0030527">
    <property type="term" value="F:structural constituent of chromatin"/>
    <property type="evidence" value="ECO:0007669"/>
    <property type="project" value="InterPro"/>
</dbReference>
<dbReference type="CDD" id="cd22910">
    <property type="entry name" value="HFD_H2B"/>
    <property type="match status" value="1"/>
</dbReference>
<dbReference type="FunFam" id="1.10.20.10:FF:000014">
    <property type="entry name" value="Histone H2B"/>
    <property type="match status" value="1"/>
</dbReference>
<dbReference type="Gene3D" id="1.10.20.10">
    <property type="entry name" value="Histone, subunit A"/>
    <property type="match status" value="1"/>
</dbReference>
<dbReference type="InterPro" id="IPR009072">
    <property type="entry name" value="Histone-fold"/>
</dbReference>
<dbReference type="InterPro" id="IPR007125">
    <property type="entry name" value="Histone_H2A/H2B/H3"/>
</dbReference>
<dbReference type="InterPro" id="IPR000558">
    <property type="entry name" value="Histone_H2B"/>
</dbReference>
<dbReference type="InterPro" id="IPR055333">
    <property type="entry name" value="HISTONE_H2B_site"/>
</dbReference>
<dbReference type="PANTHER" id="PTHR23428">
    <property type="entry name" value="HISTONE H2B"/>
    <property type="match status" value="1"/>
</dbReference>
<dbReference type="Pfam" id="PF00125">
    <property type="entry name" value="Histone"/>
    <property type="match status" value="1"/>
</dbReference>
<dbReference type="PRINTS" id="PR00621">
    <property type="entry name" value="HISTONEH2B"/>
</dbReference>
<dbReference type="SMART" id="SM00427">
    <property type="entry name" value="H2B"/>
    <property type="match status" value="1"/>
</dbReference>
<dbReference type="SUPFAM" id="SSF47113">
    <property type="entry name" value="Histone-fold"/>
    <property type="match status" value="1"/>
</dbReference>
<dbReference type="PROSITE" id="PS00357">
    <property type="entry name" value="HISTONE_H2B"/>
    <property type="match status" value="1"/>
</dbReference>
<sequence length="135" mass="14816">MAPKAAEKKPVEKTPAVKKPKAEKKVPTSKEGGEKKGKKKSKKSMETYKIYIFKVLKQVHPDIGISSKAMSITNSFINDIFEKLAGESAKLARYNKKPTITSREIQTSVRLVLPGELAKHAVSEGTKAVTKFTSA</sequence>
<name>H2B4_WHEAT</name>
<gene>
    <name type="primary">TH153</name>
</gene>
<proteinExistence type="evidence at protein level"/>
<feature type="initiator methionine" description="Removed" evidence="1">
    <location>
        <position position="1"/>
    </location>
</feature>
<feature type="chain" id="PRO_0000245455" description="Histone H2B.4">
    <location>
        <begin position="2"/>
        <end position="135"/>
    </location>
</feature>
<feature type="region of interest" description="Disordered" evidence="2">
    <location>
        <begin position="1"/>
        <end position="43"/>
    </location>
</feature>
<feature type="compositionally biased region" description="Basic and acidic residues" evidence="2">
    <location>
        <begin position="1"/>
        <end position="12"/>
    </location>
</feature>
<feature type="compositionally biased region" description="Basic and acidic residues" evidence="2">
    <location>
        <begin position="23"/>
        <end position="35"/>
    </location>
</feature>
<feature type="modified residue" description="N6-acetyllysine" evidence="1">
    <location>
        <position position="8"/>
    </location>
</feature>
<feature type="modified residue" description="N6-acetyllysine" evidence="1">
    <location>
        <position position="24"/>
    </location>
</feature>
<feature type="cross-link" description="Glycyl lysine isopeptide (Lys-Gly) (interchain with G-Cter in ubiquitin)" evidence="1">
    <location>
        <position position="131"/>
    </location>
</feature>
<keyword id="KW-0007">Acetylation</keyword>
<keyword id="KW-0158">Chromosome</keyword>
<keyword id="KW-0238">DNA-binding</keyword>
<keyword id="KW-1017">Isopeptide bond</keyword>
<keyword id="KW-0544">Nucleosome core</keyword>
<keyword id="KW-0539">Nucleus</keyword>
<keyword id="KW-1185">Reference proteome</keyword>
<keyword id="KW-0832">Ubl conjugation</keyword>
<evidence type="ECO:0000250" key="1"/>
<evidence type="ECO:0000256" key="2">
    <source>
        <dbReference type="SAM" id="MobiDB-lite"/>
    </source>
</evidence>
<evidence type="ECO:0000269" key="3">
    <source>
    </source>
</evidence>
<evidence type="ECO:0000305" key="4"/>
<comment type="function">
    <text>Core component of nucleosome. Nucleosomes wrap and compact DNA into chromatin, limiting DNA accessibility to the cellular machineries which require DNA as a template. Histones thereby play a central role in transcription regulation, DNA repair, DNA replication and chromosomal stability. DNA accessibility is regulated via a complex set of post-translational modifications of histones, also called histone code, and nucleosome remodeling.</text>
</comment>
<comment type="subunit">
    <text>The nucleosome is a histone octamer containing two molecules each of H2A, H2B, H3 and H4 assembled in one H3-H4 heterotetramer and two H2A-H2B heterodimers. The octamer wraps approximately 147 bp of DNA.</text>
</comment>
<comment type="subcellular location">
    <subcellularLocation>
        <location evidence="1">Nucleus</location>
    </subcellularLocation>
    <subcellularLocation>
        <location evidence="1">Chromosome</location>
    </subcellularLocation>
</comment>
<comment type="tissue specificity">
    <text evidence="3">Expressed preferentially in meristematic tissues.</text>
</comment>
<comment type="PTM">
    <text evidence="1">Can be acetylated to form H2BK6ac and H2BK33ac.</text>
</comment>
<comment type="PTM">
    <text evidence="1">Monoubiquitinated to form H2BK143ub1; may give a specific tag for epigenetic transcriptional activation.</text>
</comment>
<comment type="miscellaneous">
    <text>Phosphorylation of H2B was not detected.</text>
</comment>
<comment type="similarity">
    <text evidence="4">Belongs to the histone H2B family.</text>
</comment>
<comment type="caution">
    <text evidence="4">To ensure consistency between histone entries, we follow the 'Brno' nomenclature for histone modifications, with positions referring to those used in the literature for the 'closest' model organism. Due to slight variations in histone sequences between organisms and to the presence of initiator methionine in UniProtKB/Swiss-Prot sequences, the actual positions of modified amino acids in the sequence generally differ. In this entry the following conventions are used: H2BK6ac = acetylated Lys-8; H2BK33ac = acetylated Lys-24; H2BK143ub1 = monoubiquitinated Lys-131.</text>
</comment>
<organism>
    <name type="scientific">Triticum aestivum</name>
    <name type="common">Wheat</name>
    <dbReference type="NCBI Taxonomy" id="4565"/>
    <lineage>
        <taxon>Eukaryota</taxon>
        <taxon>Viridiplantae</taxon>
        <taxon>Streptophyta</taxon>
        <taxon>Embryophyta</taxon>
        <taxon>Tracheophyta</taxon>
        <taxon>Spermatophyta</taxon>
        <taxon>Magnoliopsida</taxon>
        <taxon>Liliopsida</taxon>
        <taxon>Poales</taxon>
        <taxon>Poaceae</taxon>
        <taxon>BOP clade</taxon>
        <taxon>Pooideae</taxon>
        <taxon>Triticodae</taxon>
        <taxon>Triticeae</taxon>
        <taxon>Triticinae</taxon>
        <taxon>Triticum</taxon>
    </lineage>
</organism>
<reference key="1">
    <citation type="journal article" date="1995" name="Plant Mol. Biol.">
        <title>Structural and functional characterization of two wheat histone H2B promoters.</title>
        <authorList>
            <person name="Yang P."/>
            <person name="Taoka K."/>
            <person name="Nakayma T."/>
            <person name="Iwabuchi M."/>
        </authorList>
    </citation>
    <scope>NUCLEOTIDE SEQUENCE [GENOMIC DNA]</scope>
    <scope>TISSUE SPECIFICITY</scope>
</reference>
<reference key="2">
    <citation type="journal article" date="1990" name="Plant Physiol.">
        <title>Phosphorylation of plant H2A histones.</title>
        <authorList>
            <person name="Green G.R."/>
            <person name="Gustavsen L.C."/>
            <person name="Poccia D.L."/>
        </authorList>
    </citation>
    <scope>LACK OF PHOSPHORYLATION</scope>
</reference>
<protein>
    <recommendedName>
        <fullName>Histone H2B.4</fullName>
    </recommendedName>
    <alternativeName>
        <fullName>H2B153</fullName>
    </alternativeName>
</protein>